<comment type="function">
    <text evidence="1">Accelerates the degradation of transcripts by removing pyrophosphate from the 5'-end of triphosphorylated RNA, leading to a more labile monophosphorylated state that can stimulate subsequent ribonuclease cleavage.</text>
</comment>
<comment type="cofactor">
    <cofactor evidence="1">
        <name>a divalent metal cation</name>
        <dbReference type="ChEBI" id="CHEBI:60240"/>
    </cofactor>
</comment>
<comment type="similarity">
    <text evidence="1">Belongs to the Nudix hydrolase family. RppH subfamily.</text>
</comment>
<sequence length="216" mass="25293">MLDREGFRPNVGIILLNAHNEVFWGKRLREHSWQFPQGGIKYGETPMQAMYRELHEETGLLPEHVKIIGRTRDWLRYEVPDKFIKREVRGHYRGQKQIWFLLRMVGRDCDICLRATDHPEFDAWRWNEYWVPLDAVIEFKRDVYQLALTELSRFLRRPAQRTDKSRGPRAPRYPRVANGHAASETPAAIDTSAVCSEVEPGANALDETPPRVSLRD</sequence>
<accession>A3NDS3</accession>
<organism>
    <name type="scientific">Burkholderia pseudomallei (strain 668)</name>
    <dbReference type="NCBI Taxonomy" id="320373"/>
    <lineage>
        <taxon>Bacteria</taxon>
        <taxon>Pseudomonadati</taxon>
        <taxon>Pseudomonadota</taxon>
        <taxon>Betaproteobacteria</taxon>
        <taxon>Burkholderiales</taxon>
        <taxon>Burkholderiaceae</taxon>
        <taxon>Burkholderia</taxon>
        <taxon>pseudomallei group</taxon>
    </lineage>
</organism>
<evidence type="ECO:0000255" key="1">
    <source>
        <dbReference type="HAMAP-Rule" id="MF_00298"/>
    </source>
</evidence>
<evidence type="ECO:0000256" key="2">
    <source>
        <dbReference type="SAM" id="MobiDB-lite"/>
    </source>
</evidence>
<proteinExistence type="inferred from homology"/>
<protein>
    <recommendedName>
        <fullName evidence="1">RNA pyrophosphohydrolase</fullName>
        <ecNumber evidence="1">3.6.1.-</ecNumber>
    </recommendedName>
    <alternativeName>
        <fullName evidence="1">(Di)nucleoside polyphosphate hydrolase</fullName>
    </alternativeName>
</protein>
<gene>
    <name evidence="1" type="primary">rppH</name>
    <name evidence="1" type="synonym">nudH</name>
    <name type="ordered locus">BURPS668_3483</name>
</gene>
<keyword id="KW-0378">Hydrolase</keyword>
<name>RPPH_BURP6</name>
<reference key="1">
    <citation type="journal article" date="2010" name="Genome Biol. Evol.">
        <title>Continuing evolution of Burkholderia mallei through genome reduction and large-scale rearrangements.</title>
        <authorList>
            <person name="Losada L."/>
            <person name="Ronning C.M."/>
            <person name="DeShazer D."/>
            <person name="Woods D."/>
            <person name="Fedorova N."/>
            <person name="Kim H.S."/>
            <person name="Shabalina S.A."/>
            <person name="Pearson T.R."/>
            <person name="Brinkac L."/>
            <person name="Tan P."/>
            <person name="Nandi T."/>
            <person name="Crabtree J."/>
            <person name="Badger J."/>
            <person name="Beckstrom-Sternberg S."/>
            <person name="Saqib M."/>
            <person name="Schutzer S.E."/>
            <person name="Keim P."/>
            <person name="Nierman W.C."/>
        </authorList>
    </citation>
    <scope>NUCLEOTIDE SEQUENCE [LARGE SCALE GENOMIC DNA]</scope>
    <source>
        <strain>668</strain>
    </source>
</reference>
<feature type="chain" id="PRO_1000021938" description="RNA pyrophosphohydrolase">
    <location>
        <begin position="1"/>
        <end position="216"/>
    </location>
</feature>
<feature type="domain" description="Nudix hydrolase" evidence="1">
    <location>
        <begin position="6"/>
        <end position="149"/>
    </location>
</feature>
<feature type="region of interest" description="Disordered" evidence="2">
    <location>
        <begin position="159"/>
        <end position="191"/>
    </location>
</feature>
<feature type="short sequence motif" description="Nudix box">
    <location>
        <begin position="38"/>
        <end position="59"/>
    </location>
</feature>
<dbReference type="EC" id="3.6.1.-" evidence="1"/>
<dbReference type="EMBL" id="CP000570">
    <property type="protein sequence ID" value="ABN81964.1"/>
    <property type="molecule type" value="Genomic_DNA"/>
</dbReference>
<dbReference type="RefSeq" id="WP_011852215.1">
    <property type="nucleotide sequence ID" value="NC_009074.1"/>
</dbReference>
<dbReference type="SMR" id="A3NDS3"/>
<dbReference type="KEGG" id="bpd:BURPS668_3483"/>
<dbReference type="HOGENOM" id="CLU_087195_0_1_4"/>
<dbReference type="GO" id="GO:0016462">
    <property type="term" value="F:pyrophosphatase activity"/>
    <property type="evidence" value="ECO:0007669"/>
    <property type="project" value="UniProtKB-ARBA"/>
</dbReference>
<dbReference type="CDD" id="cd03671">
    <property type="entry name" value="NUDIX_Ap4A_hydrolase_plant_like"/>
    <property type="match status" value="1"/>
</dbReference>
<dbReference type="Gene3D" id="3.90.79.10">
    <property type="entry name" value="Nucleoside Triphosphate Pyrophosphohydrolase"/>
    <property type="match status" value="1"/>
</dbReference>
<dbReference type="HAMAP" id="MF_00298">
    <property type="entry name" value="Nudix_RppH"/>
    <property type="match status" value="1"/>
</dbReference>
<dbReference type="InterPro" id="IPR020476">
    <property type="entry name" value="Nudix_hydrolase"/>
</dbReference>
<dbReference type="InterPro" id="IPR015797">
    <property type="entry name" value="NUDIX_hydrolase-like_dom_sf"/>
</dbReference>
<dbReference type="InterPro" id="IPR020084">
    <property type="entry name" value="NUDIX_hydrolase_CS"/>
</dbReference>
<dbReference type="InterPro" id="IPR000086">
    <property type="entry name" value="NUDIX_hydrolase_dom"/>
</dbReference>
<dbReference type="InterPro" id="IPR022927">
    <property type="entry name" value="RppH"/>
</dbReference>
<dbReference type="NCBIfam" id="NF001935">
    <property type="entry name" value="PRK00714.1-2"/>
    <property type="match status" value="1"/>
</dbReference>
<dbReference type="NCBIfam" id="NF001937">
    <property type="entry name" value="PRK00714.1-4"/>
    <property type="match status" value="1"/>
</dbReference>
<dbReference type="NCBIfam" id="NF001938">
    <property type="entry name" value="PRK00714.1-5"/>
    <property type="match status" value="1"/>
</dbReference>
<dbReference type="PANTHER" id="PTHR43736">
    <property type="entry name" value="ADP-RIBOSE PYROPHOSPHATASE"/>
    <property type="match status" value="1"/>
</dbReference>
<dbReference type="PANTHER" id="PTHR43736:SF1">
    <property type="entry name" value="DIHYDRONEOPTERIN TRIPHOSPHATE DIPHOSPHATASE"/>
    <property type="match status" value="1"/>
</dbReference>
<dbReference type="Pfam" id="PF00293">
    <property type="entry name" value="NUDIX"/>
    <property type="match status" value="1"/>
</dbReference>
<dbReference type="PRINTS" id="PR00502">
    <property type="entry name" value="NUDIXFAMILY"/>
</dbReference>
<dbReference type="SUPFAM" id="SSF55811">
    <property type="entry name" value="Nudix"/>
    <property type="match status" value="1"/>
</dbReference>
<dbReference type="PROSITE" id="PS51462">
    <property type="entry name" value="NUDIX"/>
    <property type="match status" value="1"/>
</dbReference>
<dbReference type="PROSITE" id="PS00893">
    <property type="entry name" value="NUDIX_BOX"/>
    <property type="match status" value="1"/>
</dbReference>